<sequence>MTFETISVTLEEGKTLVFETGKIARQANGAVLARMQETWVFSSVCAATLEEPVDFLPLRVDYQEKFSSIGKTLGGFIKREGRPTEREILTSRLIDRSMRPSLPNRLMQDVQILSYVWSYDGVTLPDPIAICGVSAALAISDIPQINIVAGVRVGFINNTWVVNPTKAEMDVSRMELVLAGTEKAILMIEGHCDFFTEEQVIEAIEFGHKHIVTICKAIEDWQKQIGKEKNTSAVVPLPEQVQTAVNTLVEGKFSDLLQIKEKKAFEAASKQLENDIVEKLQEENEIFTPLNIKTAFKQAKSDYMRSLIRKQGLRSDGRSVTTIRPISIDTSFLPRTHGSCLFTRGETQTVAVCTLGSEAMAQRYEDLNGEGLAKFYLQYFFPPFSVGEVGRIGSPGRREIGHGKLAEKALSHALPDPAKFPYTIRIESNITESNGSSSMASVCGGCLALMDAGVPIKTPIAGIAMGLILDDDHVTILSDISGLEDHLGDMDFKVAGNAEGITAFQMDIKVEGITPEIMQAALAQAKSGRQNILETMKATLASPKTDLSQYAPRIETMQIKPNKIATVIGPGGKQIRQIIEEAGVQIDINDSGLVSISASSPQAIEKAKSIIEGLVGEVEVGKIYEGRVTSIVPFGAFVEILPGKEGLCHISEFSKQRIENVGDFVKQGDILPVKLLSINEKGQYKLSHKATLSE</sequence>
<proteinExistence type="inferred from homology"/>
<comment type="function">
    <text evidence="1">Involved in mRNA degradation. Catalyzes the phosphorolysis of single-stranded polyribonucleotides processively in the 3'- to 5'-direction.</text>
</comment>
<comment type="catalytic activity">
    <reaction evidence="1">
        <text>RNA(n+1) + phosphate = RNA(n) + a ribonucleoside 5'-diphosphate</text>
        <dbReference type="Rhea" id="RHEA:22096"/>
        <dbReference type="Rhea" id="RHEA-COMP:14527"/>
        <dbReference type="Rhea" id="RHEA-COMP:17342"/>
        <dbReference type="ChEBI" id="CHEBI:43474"/>
        <dbReference type="ChEBI" id="CHEBI:57930"/>
        <dbReference type="ChEBI" id="CHEBI:140395"/>
        <dbReference type="EC" id="2.7.7.8"/>
    </reaction>
</comment>
<comment type="cofactor">
    <cofactor evidence="1">
        <name>Mg(2+)</name>
        <dbReference type="ChEBI" id="CHEBI:18420"/>
    </cofactor>
</comment>
<comment type="subcellular location">
    <subcellularLocation>
        <location evidence="1">Cytoplasm</location>
    </subcellularLocation>
</comment>
<comment type="similarity">
    <text evidence="1">Belongs to the polyribonucleotide nucleotidyltransferase family.</text>
</comment>
<name>PNP_CHLFF</name>
<accession>Q255L4</accession>
<protein>
    <recommendedName>
        <fullName evidence="1">Polyribonucleotide nucleotidyltransferase</fullName>
        <ecNumber evidence="1">2.7.7.8</ecNumber>
    </recommendedName>
    <alternativeName>
        <fullName evidence="1">Polynucleotide phosphorylase</fullName>
        <shortName evidence="1">PNPase</shortName>
    </alternativeName>
</protein>
<gene>
    <name evidence="1" type="primary">pnp</name>
    <name type="ordered locus">CF0252</name>
</gene>
<dbReference type="EC" id="2.7.7.8" evidence="1"/>
<dbReference type="EMBL" id="AP006861">
    <property type="protein sequence ID" value="BAE81024.1"/>
    <property type="molecule type" value="Genomic_DNA"/>
</dbReference>
<dbReference type="RefSeq" id="WP_011457805.1">
    <property type="nucleotide sequence ID" value="NC_007899.1"/>
</dbReference>
<dbReference type="SMR" id="Q255L4"/>
<dbReference type="STRING" id="264202.CF0252"/>
<dbReference type="KEGG" id="cfe:CF0252"/>
<dbReference type="eggNOG" id="COG1185">
    <property type="taxonomic scope" value="Bacteria"/>
</dbReference>
<dbReference type="HOGENOM" id="CLU_004217_2_2_0"/>
<dbReference type="OrthoDB" id="9804305at2"/>
<dbReference type="Proteomes" id="UP000001260">
    <property type="component" value="Chromosome"/>
</dbReference>
<dbReference type="GO" id="GO:0005829">
    <property type="term" value="C:cytosol"/>
    <property type="evidence" value="ECO:0007669"/>
    <property type="project" value="TreeGrafter"/>
</dbReference>
<dbReference type="GO" id="GO:0000175">
    <property type="term" value="F:3'-5'-RNA exonuclease activity"/>
    <property type="evidence" value="ECO:0007669"/>
    <property type="project" value="TreeGrafter"/>
</dbReference>
<dbReference type="GO" id="GO:0000287">
    <property type="term" value="F:magnesium ion binding"/>
    <property type="evidence" value="ECO:0007669"/>
    <property type="project" value="UniProtKB-UniRule"/>
</dbReference>
<dbReference type="GO" id="GO:0004654">
    <property type="term" value="F:polyribonucleotide nucleotidyltransferase activity"/>
    <property type="evidence" value="ECO:0007669"/>
    <property type="project" value="UniProtKB-UniRule"/>
</dbReference>
<dbReference type="GO" id="GO:0003723">
    <property type="term" value="F:RNA binding"/>
    <property type="evidence" value="ECO:0007669"/>
    <property type="project" value="UniProtKB-UniRule"/>
</dbReference>
<dbReference type="GO" id="GO:0006402">
    <property type="term" value="P:mRNA catabolic process"/>
    <property type="evidence" value="ECO:0007669"/>
    <property type="project" value="UniProtKB-UniRule"/>
</dbReference>
<dbReference type="GO" id="GO:0006396">
    <property type="term" value="P:RNA processing"/>
    <property type="evidence" value="ECO:0007669"/>
    <property type="project" value="InterPro"/>
</dbReference>
<dbReference type="CDD" id="cd02393">
    <property type="entry name" value="KH-I_PNPase"/>
    <property type="match status" value="1"/>
</dbReference>
<dbReference type="CDD" id="cd11363">
    <property type="entry name" value="RNase_PH_PNPase_1"/>
    <property type="match status" value="1"/>
</dbReference>
<dbReference type="CDD" id="cd11364">
    <property type="entry name" value="RNase_PH_PNPase_2"/>
    <property type="match status" value="1"/>
</dbReference>
<dbReference type="CDD" id="cd04472">
    <property type="entry name" value="S1_PNPase"/>
    <property type="match status" value="1"/>
</dbReference>
<dbReference type="FunFam" id="3.30.1370.10:FF:000001">
    <property type="entry name" value="Polyribonucleotide nucleotidyltransferase"/>
    <property type="match status" value="1"/>
</dbReference>
<dbReference type="FunFam" id="3.30.230.70:FF:000001">
    <property type="entry name" value="Polyribonucleotide nucleotidyltransferase"/>
    <property type="match status" value="1"/>
</dbReference>
<dbReference type="FunFam" id="3.30.230.70:FF:000002">
    <property type="entry name" value="Polyribonucleotide nucleotidyltransferase"/>
    <property type="match status" value="1"/>
</dbReference>
<dbReference type="FunFam" id="2.40.50.140:FF:000189">
    <property type="entry name" value="Polyribonucleotide nucleotidyltransferase, putative"/>
    <property type="match status" value="1"/>
</dbReference>
<dbReference type="Gene3D" id="3.30.230.70">
    <property type="entry name" value="GHMP Kinase, N-terminal domain"/>
    <property type="match status" value="2"/>
</dbReference>
<dbReference type="Gene3D" id="3.30.1370.10">
    <property type="entry name" value="K Homology domain, type 1"/>
    <property type="match status" value="1"/>
</dbReference>
<dbReference type="Gene3D" id="2.40.50.140">
    <property type="entry name" value="Nucleic acid-binding proteins"/>
    <property type="match status" value="1"/>
</dbReference>
<dbReference type="HAMAP" id="MF_01595">
    <property type="entry name" value="PNPase"/>
    <property type="match status" value="1"/>
</dbReference>
<dbReference type="InterPro" id="IPR001247">
    <property type="entry name" value="ExoRNase_PH_dom1"/>
</dbReference>
<dbReference type="InterPro" id="IPR015847">
    <property type="entry name" value="ExoRNase_PH_dom2"/>
</dbReference>
<dbReference type="InterPro" id="IPR036345">
    <property type="entry name" value="ExoRNase_PH_dom2_sf"/>
</dbReference>
<dbReference type="InterPro" id="IPR004087">
    <property type="entry name" value="KH_dom"/>
</dbReference>
<dbReference type="InterPro" id="IPR004088">
    <property type="entry name" value="KH_dom_type_1"/>
</dbReference>
<dbReference type="InterPro" id="IPR036612">
    <property type="entry name" value="KH_dom_type_1_sf"/>
</dbReference>
<dbReference type="InterPro" id="IPR012340">
    <property type="entry name" value="NA-bd_OB-fold"/>
</dbReference>
<dbReference type="InterPro" id="IPR012162">
    <property type="entry name" value="PNPase"/>
</dbReference>
<dbReference type="InterPro" id="IPR027408">
    <property type="entry name" value="PNPase/RNase_PH_dom_sf"/>
</dbReference>
<dbReference type="InterPro" id="IPR015848">
    <property type="entry name" value="PNPase_PH_RNA-bd_bac/org-type"/>
</dbReference>
<dbReference type="InterPro" id="IPR036456">
    <property type="entry name" value="PNPase_PH_RNA-bd_sf"/>
</dbReference>
<dbReference type="InterPro" id="IPR020568">
    <property type="entry name" value="Ribosomal_Su5_D2-typ_SF"/>
</dbReference>
<dbReference type="InterPro" id="IPR003029">
    <property type="entry name" value="S1_domain"/>
</dbReference>
<dbReference type="NCBIfam" id="TIGR03591">
    <property type="entry name" value="polynuc_phos"/>
    <property type="match status" value="1"/>
</dbReference>
<dbReference type="NCBIfam" id="NF008805">
    <property type="entry name" value="PRK11824.1"/>
    <property type="match status" value="1"/>
</dbReference>
<dbReference type="PANTHER" id="PTHR11252">
    <property type="entry name" value="POLYRIBONUCLEOTIDE NUCLEOTIDYLTRANSFERASE"/>
    <property type="match status" value="1"/>
</dbReference>
<dbReference type="PANTHER" id="PTHR11252:SF0">
    <property type="entry name" value="POLYRIBONUCLEOTIDE NUCLEOTIDYLTRANSFERASE 1, MITOCHONDRIAL"/>
    <property type="match status" value="1"/>
</dbReference>
<dbReference type="Pfam" id="PF00013">
    <property type="entry name" value="KH_1"/>
    <property type="match status" value="1"/>
</dbReference>
<dbReference type="Pfam" id="PF03726">
    <property type="entry name" value="PNPase"/>
    <property type="match status" value="1"/>
</dbReference>
<dbReference type="Pfam" id="PF01138">
    <property type="entry name" value="RNase_PH"/>
    <property type="match status" value="2"/>
</dbReference>
<dbReference type="Pfam" id="PF03725">
    <property type="entry name" value="RNase_PH_C"/>
    <property type="match status" value="2"/>
</dbReference>
<dbReference type="Pfam" id="PF00575">
    <property type="entry name" value="S1"/>
    <property type="match status" value="1"/>
</dbReference>
<dbReference type="PIRSF" id="PIRSF005499">
    <property type="entry name" value="PNPase"/>
    <property type="match status" value="1"/>
</dbReference>
<dbReference type="SMART" id="SM00322">
    <property type="entry name" value="KH"/>
    <property type="match status" value="1"/>
</dbReference>
<dbReference type="SMART" id="SM00316">
    <property type="entry name" value="S1"/>
    <property type="match status" value="1"/>
</dbReference>
<dbReference type="SUPFAM" id="SSF54791">
    <property type="entry name" value="Eukaryotic type KH-domain (KH-domain type I)"/>
    <property type="match status" value="1"/>
</dbReference>
<dbReference type="SUPFAM" id="SSF50249">
    <property type="entry name" value="Nucleic acid-binding proteins"/>
    <property type="match status" value="1"/>
</dbReference>
<dbReference type="SUPFAM" id="SSF46915">
    <property type="entry name" value="Polynucleotide phosphorylase/guanosine pentaphosphate synthase (PNPase/GPSI), domain 3"/>
    <property type="match status" value="1"/>
</dbReference>
<dbReference type="SUPFAM" id="SSF55666">
    <property type="entry name" value="Ribonuclease PH domain 2-like"/>
    <property type="match status" value="2"/>
</dbReference>
<dbReference type="SUPFAM" id="SSF54211">
    <property type="entry name" value="Ribosomal protein S5 domain 2-like"/>
    <property type="match status" value="2"/>
</dbReference>
<dbReference type="PROSITE" id="PS50084">
    <property type="entry name" value="KH_TYPE_1"/>
    <property type="match status" value="1"/>
</dbReference>
<dbReference type="PROSITE" id="PS50126">
    <property type="entry name" value="S1"/>
    <property type="match status" value="1"/>
</dbReference>
<feature type="chain" id="PRO_0000329584" description="Polyribonucleotide nucleotidyltransferase">
    <location>
        <begin position="1"/>
        <end position="694"/>
    </location>
</feature>
<feature type="domain" description="KH" evidence="1">
    <location>
        <begin position="552"/>
        <end position="611"/>
    </location>
</feature>
<feature type="domain" description="S1 motif" evidence="1">
    <location>
        <begin position="621"/>
        <end position="689"/>
    </location>
</feature>
<feature type="binding site" evidence="1">
    <location>
        <position position="485"/>
    </location>
    <ligand>
        <name>Mg(2+)</name>
        <dbReference type="ChEBI" id="CHEBI:18420"/>
    </ligand>
</feature>
<feature type="binding site" evidence="1">
    <location>
        <position position="491"/>
    </location>
    <ligand>
        <name>Mg(2+)</name>
        <dbReference type="ChEBI" id="CHEBI:18420"/>
    </ligand>
</feature>
<evidence type="ECO:0000255" key="1">
    <source>
        <dbReference type="HAMAP-Rule" id="MF_01595"/>
    </source>
</evidence>
<reference key="1">
    <citation type="journal article" date="2006" name="DNA Res.">
        <title>Genome sequence of the cat pathogen, Chlamydophila felis.</title>
        <authorList>
            <person name="Azuma Y."/>
            <person name="Hirakawa H."/>
            <person name="Yamashita A."/>
            <person name="Cai Y."/>
            <person name="Rahman M.A."/>
            <person name="Suzuki H."/>
            <person name="Mitaku S."/>
            <person name="Toh H."/>
            <person name="Goto S."/>
            <person name="Murakami T."/>
            <person name="Sugi K."/>
            <person name="Hayashi H."/>
            <person name="Fukushi H."/>
            <person name="Hattori M."/>
            <person name="Kuhara S."/>
            <person name="Shirai M."/>
        </authorList>
    </citation>
    <scope>NUCLEOTIDE SEQUENCE [LARGE SCALE GENOMIC DNA]</scope>
    <source>
        <strain>Fe/C-56</strain>
    </source>
</reference>
<keyword id="KW-0963">Cytoplasm</keyword>
<keyword id="KW-0460">Magnesium</keyword>
<keyword id="KW-0479">Metal-binding</keyword>
<keyword id="KW-0548">Nucleotidyltransferase</keyword>
<keyword id="KW-0694">RNA-binding</keyword>
<keyword id="KW-0808">Transferase</keyword>
<organism>
    <name type="scientific">Chlamydia felis (strain Fe/C-56)</name>
    <name type="common">Chlamydophila felis</name>
    <dbReference type="NCBI Taxonomy" id="264202"/>
    <lineage>
        <taxon>Bacteria</taxon>
        <taxon>Pseudomonadati</taxon>
        <taxon>Chlamydiota</taxon>
        <taxon>Chlamydiia</taxon>
        <taxon>Chlamydiales</taxon>
        <taxon>Chlamydiaceae</taxon>
        <taxon>Chlamydia/Chlamydophila group</taxon>
        <taxon>Chlamydia</taxon>
    </lineage>
</organism>